<protein>
    <recommendedName>
        <fullName>Dehydrodolichyl diphosphate synthase 6</fullName>
        <shortName>Dedol-PP synthase 6</shortName>
        <ecNumber>2.5.1.-</ecNumber>
    </recommendedName>
</protein>
<reference key="1">
    <citation type="journal article" date="1999" name="Nature">
        <title>Sequence and analysis of chromosome 2 of the plant Arabidopsis thaliana.</title>
        <authorList>
            <person name="Lin X."/>
            <person name="Kaul S."/>
            <person name="Rounsley S.D."/>
            <person name="Shea T.P."/>
            <person name="Benito M.-I."/>
            <person name="Town C.D."/>
            <person name="Fujii C.Y."/>
            <person name="Mason T.M."/>
            <person name="Bowman C.L."/>
            <person name="Barnstead M.E."/>
            <person name="Feldblyum T.V."/>
            <person name="Buell C.R."/>
            <person name="Ketchum K.A."/>
            <person name="Lee J.J."/>
            <person name="Ronning C.M."/>
            <person name="Koo H.L."/>
            <person name="Moffat K.S."/>
            <person name="Cronin L.A."/>
            <person name="Shen M."/>
            <person name="Pai G."/>
            <person name="Van Aken S."/>
            <person name="Umayam L."/>
            <person name="Tallon L.J."/>
            <person name="Gill J.E."/>
            <person name="Adams M.D."/>
            <person name="Carrera A.J."/>
            <person name="Creasy T.H."/>
            <person name="Goodman H.M."/>
            <person name="Somerville C.R."/>
            <person name="Copenhaver G.P."/>
            <person name="Preuss D."/>
            <person name="Nierman W.C."/>
            <person name="White O."/>
            <person name="Eisen J.A."/>
            <person name="Salzberg S.L."/>
            <person name="Fraser C.M."/>
            <person name="Venter J.C."/>
        </authorList>
    </citation>
    <scope>NUCLEOTIDE SEQUENCE [LARGE SCALE GENOMIC DNA]</scope>
    <source>
        <strain>cv. Columbia</strain>
    </source>
</reference>
<reference key="2">
    <citation type="journal article" date="2017" name="Plant J.">
        <title>Araport11: a complete reannotation of the Arabidopsis thaliana reference genome.</title>
        <authorList>
            <person name="Cheng C.Y."/>
            <person name="Krishnakumar V."/>
            <person name="Chan A.P."/>
            <person name="Thibaud-Nissen F."/>
            <person name="Schobel S."/>
            <person name="Town C.D."/>
        </authorList>
    </citation>
    <scope>GENOME REANNOTATION</scope>
    <source>
        <strain>cv. Columbia</strain>
    </source>
</reference>
<reference key="3">
    <citation type="submission" date="2005-03" db="EMBL/GenBank/DDBJ databases">
        <authorList>
            <person name="Underwood B.A."/>
            <person name="Xiao Y.-L."/>
            <person name="Moskal W.A. Jr."/>
            <person name="Monaghan E.L."/>
            <person name="Wang W."/>
            <person name="Redman J.C."/>
            <person name="Wu H.C."/>
            <person name="Utterback T."/>
            <person name="Town C.D."/>
        </authorList>
    </citation>
    <scope>NUCLEOTIDE SEQUENCE [LARGE SCALE GENOMIC DNA]</scope>
    <source>
        <strain>cv. Columbia</strain>
    </source>
</reference>
<reference key="4">
    <citation type="journal article" date="2003" name="Science">
        <title>Empirical analysis of transcriptional activity in the Arabidopsis genome.</title>
        <authorList>
            <person name="Yamada K."/>
            <person name="Lim J."/>
            <person name="Dale J.M."/>
            <person name="Chen H."/>
            <person name="Shinn P."/>
            <person name="Palm C.J."/>
            <person name="Southwick A.M."/>
            <person name="Wu H.C."/>
            <person name="Kim C.J."/>
            <person name="Nguyen M."/>
            <person name="Pham P.K."/>
            <person name="Cheuk R.F."/>
            <person name="Karlin-Newmann G."/>
            <person name="Liu S.X."/>
            <person name="Lam B."/>
            <person name="Sakano H."/>
            <person name="Wu T."/>
            <person name="Yu G."/>
            <person name="Miranda M."/>
            <person name="Quach H.L."/>
            <person name="Tripp M."/>
            <person name="Chang C.H."/>
            <person name="Lee J.M."/>
            <person name="Toriumi M.J."/>
            <person name="Chan M.M."/>
            <person name="Tang C.C."/>
            <person name="Onodera C.S."/>
            <person name="Deng J.M."/>
            <person name="Akiyama K."/>
            <person name="Ansari Y."/>
            <person name="Arakawa T."/>
            <person name="Banh J."/>
            <person name="Banno F."/>
            <person name="Bowser L."/>
            <person name="Brooks S.Y."/>
            <person name="Carninci P."/>
            <person name="Chao Q."/>
            <person name="Choy N."/>
            <person name="Enju A."/>
            <person name="Goldsmith A.D."/>
            <person name="Gurjal M."/>
            <person name="Hansen N.F."/>
            <person name="Hayashizaki Y."/>
            <person name="Johnson-Hopson C."/>
            <person name="Hsuan V.W."/>
            <person name="Iida K."/>
            <person name="Karnes M."/>
            <person name="Khan S."/>
            <person name="Koesema E."/>
            <person name="Ishida J."/>
            <person name="Jiang P.X."/>
            <person name="Jones T."/>
            <person name="Kawai J."/>
            <person name="Kamiya A."/>
            <person name="Meyers C."/>
            <person name="Nakajima M."/>
            <person name="Narusaka M."/>
            <person name="Seki M."/>
            <person name="Sakurai T."/>
            <person name="Satou M."/>
            <person name="Tamse R."/>
            <person name="Vaysberg M."/>
            <person name="Wallender E.K."/>
            <person name="Wong C."/>
            <person name="Yamamura Y."/>
            <person name="Yuan S."/>
            <person name="Shinozaki K."/>
            <person name="Davis R.W."/>
            <person name="Theologis A."/>
            <person name="Ecker J.R."/>
        </authorList>
    </citation>
    <scope>NUCLEOTIDE SEQUENCE [LARGE SCALE MRNA]</scope>
    <source>
        <strain>cv. Columbia</strain>
    </source>
</reference>
<reference key="5">
    <citation type="journal article" date="2002" name="Plant Physiol.">
        <title>Cloning and sequencing of cDNAs for hypothetical genes from chromosome 2 of Arabidopsis.</title>
        <authorList>
            <person name="Xiao Y.-L."/>
            <person name="Malik M."/>
            <person name="Whitelaw C.A."/>
            <person name="Town C.D."/>
        </authorList>
    </citation>
    <scope>NUCLEOTIDE SEQUENCE [LARGE SCALE MRNA]</scope>
    <source>
        <strain>cv. Columbia</strain>
    </source>
</reference>
<reference key="6">
    <citation type="journal article" date="2005" name="Plant Physiol.">
        <title>Analysis of the cDNAs of hypothetical genes on Arabidopsis chromosome 2 reveals numerous transcript variants.</title>
        <authorList>
            <person name="Xiao Y.-L."/>
            <person name="Smith S.R."/>
            <person name="Ishmael N."/>
            <person name="Redman J.C."/>
            <person name="Kumar N."/>
            <person name="Monaghan E.L."/>
            <person name="Ayele M."/>
            <person name="Haas B.J."/>
            <person name="Wu H.C."/>
            <person name="Town C.D."/>
        </authorList>
    </citation>
    <scope>NUCLEOTIDE SEQUENCE [LARGE SCALE MRNA]</scope>
    <source>
        <strain>cv. Columbia</strain>
    </source>
</reference>
<organism>
    <name type="scientific">Arabidopsis thaliana</name>
    <name type="common">Mouse-ear cress</name>
    <dbReference type="NCBI Taxonomy" id="3702"/>
    <lineage>
        <taxon>Eukaryota</taxon>
        <taxon>Viridiplantae</taxon>
        <taxon>Streptophyta</taxon>
        <taxon>Embryophyta</taxon>
        <taxon>Tracheophyta</taxon>
        <taxon>Spermatophyta</taxon>
        <taxon>Magnoliopsida</taxon>
        <taxon>eudicotyledons</taxon>
        <taxon>Gunneridae</taxon>
        <taxon>Pentapetalae</taxon>
        <taxon>rosids</taxon>
        <taxon>malvids</taxon>
        <taxon>Brassicales</taxon>
        <taxon>Brassicaceae</taxon>
        <taxon>Camelineae</taxon>
        <taxon>Arabidopsis</taxon>
    </lineage>
</organism>
<feature type="chain" id="PRO_0000123756" description="Dehydrodolichyl diphosphate synthase 6">
    <location>
        <begin position="1"/>
        <end position="295"/>
    </location>
</feature>
<feature type="sequence conflict" description="In Ref. 4; AAK62455." evidence="2" ref="4">
    <original>C</original>
    <variation>G</variation>
    <location>
        <position position="57"/>
    </location>
</feature>
<comment type="function">
    <text evidence="1">Catalyzes cis-prenyl chain elongation to produce the polyprenyl backbone of dolichol, a glycosyl carrier-lipid required for the biosynthesis of several classes of glycoprotein.</text>
</comment>
<comment type="cofactor">
    <cofactor evidence="1">
        <name>Mg(2+)</name>
        <dbReference type="ChEBI" id="CHEBI:18420"/>
    </cofactor>
</comment>
<comment type="pathway">
    <text>Protein modification; protein glycosylation.</text>
</comment>
<comment type="similarity">
    <text evidence="2">Belongs to the UPP synthase family.</text>
</comment>
<comment type="sequence caution" evidence="2">
    <conflict type="erroneous termination">
        <sequence resource="EMBL-CDS" id="AAK62455"/>
    </conflict>
    <text>Truncated C-terminus.</text>
</comment>
<comment type="sequence caution" evidence="2">
    <conflict type="erroneous termination">
        <sequence resource="EMBL-CDS" id="AAL66925"/>
    </conflict>
    <text>Truncated C-terminus.</text>
</comment>
<keyword id="KW-1185">Reference proteome</keyword>
<keyword id="KW-0808">Transferase</keyword>
<name>DDPS6_ARATH</name>
<sequence length="295" mass="33628">MAELPGQIRHIGGRMSQLLEQIYGFSRRSLFRVISMGPIPCHIAFIMDGNRRYAKKCGLLDGSGHKAGFSALMSMLQYCYELGIKYVTIYAFSIDNFRRKPEEVESVMDLMLEKIKSLLEKESIVHQYGIRVYFIGNLALLNDQVRAAAEKVMKATAKNSRVVLLICIAYNSTDEIVQAVKKSCINKSDNIEASNYKHEDSDSDIEGTDMENQEKKIQLVDIEENMQMSVAPNPDILIRSSGETRLSNFLLWQTGNTQLCSPAALWPEIGLRHLLWAILNFQRNHSYLEKRKKQL</sequence>
<evidence type="ECO:0000250" key="1"/>
<evidence type="ECO:0000305" key="2"/>
<accession>Q8S2T1</accession>
<accession>Q94EZ4</accession>
<accession>Q9SHL2</accession>
<gene>
    <name type="ordered locus">At2g17570</name>
    <name type="ORF">MJB20.13</name>
</gene>
<proteinExistence type="evidence at transcript level"/>
<dbReference type="EC" id="2.5.1.-"/>
<dbReference type="EMBL" id="AC007584">
    <property type="protein sequence ID" value="AAD32914.2"/>
    <property type="molecule type" value="Genomic_DNA"/>
</dbReference>
<dbReference type="EMBL" id="CP002685">
    <property type="protein sequence ID" value="AEC06654.1"/>
    <property type="molecule type" value="Genomic_DNA"/>
</dbReference>
<dbReference type="EMBL" id="AF387010">
    <property type="protein sequence ID" value="AAK62455.1"/>
    <property type="status" value="ALT_SEQ"/>
    <property type="molecule type" value="mRNA"/>
</dbReference>
<dbReference type="EMBL" id="AY072510">
    <property type="protein sequence ID" value="AAL66925.1"/>
    <property type="status" value="ALT_SEQ"/>
    <property type="molecule type" value="mRNA"/>
</dbReference>
<dbReference type="EMBL" id="AF499435">
    <property type="protein sequence ID" value="AAM19345.1"/>
    <property type="molecule type" value="mRNA"/>
</dbReference>
<dbReference type="EMBL" id="AY954789">
    <property type="protein sequence ID" value="AAX55115.1"/>
    <property type="molecule type" value="Genomic_DNA"/>
</dbReference>
<dbReference type="PIR" id="G84553">
    <property type="entry name" value="G84553"/>
</dbReference>
<dbReference type="SMR" id="Q8S2T1"/>
<dbReference type="FunCoup" id="Q8S2T1">
    <property type="interactions" value="4007"/>
</dbReference>
<dbReference type="STRING" id="3702.Q8S2T1"/>
<dbReference type="PaxDb" id="3702-AT2G17570.1"/>
<dbReference type="ProteomicsDB" id="224610"/>
<dbReference type="EnsemblPlants" id="AT2G17570.1">
    <property type="protein sequence ID" value="AT2G17570.1"/>
    <property type="gene ID" value="AT2G17570"/>
</dbReference>
<dbReference type="GeneID" id="816264"/>
<dbReference type="Gramene" id="AT2G17570.1">
    <property type="protein sequence ID" value="AT2G17570.1"/>
    <property type="gene ID" value="AT2G17570"/>
</dbReference>
<dbReference type="KEGG" id="ath:AT2G17570"/>
<dbReference type="Araport" id="AT2G17570"/>
<dbReference type="TAIR" id="AT2G17570">
    <property type="gene designation" value="CPT1"/>
</dbReference>
<dbReference type="eggNOG" id="KOG1602">
    <property type="taxonomic scope" value="Eukaryota"/>
</dbReference>
<dbReference type="HOGENOM" id="CLU_038505_0_5_1"/>
<dbReference type="InParanoid" id="Q8S2T1"/>
<dbReference type="OMA" id="DFRAPHF"/>
<dbReference type="PhylomeDB" id="Q8S2T1"/>
<dbReference type="BioCyc" id="ARA:AT2G17570-MONOMER"/>
<dbReference type="UniPathway" id="UPA00378"/>
<dbReference type="PRO" id="PR:Q8S2T1"/>
<dbReference type="Proteomes" id="UP000006548">
    <property type="component" value="Chromosome 2"/>
</dbReference>
<dbReference type="ExpressionAtlas" id="Q8S2T1">
    <property type="expression patterns" value="baseline and differential"/>
</dbReference>
<dbReference type="GO" id="GO:0005783">
    <property type="term" value="C:endoplasmic reticulum"/>
    <property type="evidence" value="ECO:0000314"/>
    <property type="project" value="TAIR"/>
</dbReference>
<dbReference type="GO" id="GO:0016765">
    <property type="term" value="F:transferase activity, transferring alkyl or aryl (other than methyl) groups"/>
    <property type="evidence" value="ECO:0007669"/>
    <property type="project" value="InterPro"/>
</dbReference>
<dbReference type="GO" id="GO:0006486">
    <property type="term" value="P:protein glycosylation"/>
    <property type="evidence" value="ECO:0007669"/>
    <property type="project" value="UniProtKB-UniPathway"/>
</dbReference>
<dbReference type="CDD" id="cd00475">
    <property type="entry name" value="Cis_IPPS"/>
    <property type="match status" value="1"/>
</dbReference>
<dbReference type="FunFam" id="3.40.1180.10:FF:000010">
    <property type="entry name" value="Alkyl transferase"/>
    <property type="match status" value="1"/>
</dbReference>
<dbReference type="Gene3D" id="3.40.1180.10">
    <property type="entry name" value="Decaprenyl diphosphate synthase-like"/>
    <property type="match status" value="1"/>
</dbReference>
<dbReference type="HAMAP" id="MF_01139">
    <property type="entry name" value="ISPT"/>
    <property type="match status" value="1"/>
</dbReference>
<dbReference type="InterPro" id="IPR001441">
    <property type="entry name" value="UPP_synth-like"/>
</dbReference>
<dbReference type="InterPro" id="IPR018520">
    <property type="entry name" value="UPP_synth-like_CS"/>
</dbReference>
<dbReference type="InterPro" id="IPR036424">
    <property type="entry name" value="UPP_synth-like_sf"/>
</dbReference>
<dbReference type="NCBIfam" id="TIGR00055">
    <property type="entry name" value="uppS"/>
    <property type="match status" value="1"/>
</dbReference>
<dbReference type="PANTHER" id="PTHR10291:SF43">
    <property type="entry name" value="DEHYDRODOLICHYL DIPHOSPHATE SYNTHASE COMPLEX SUBUNIT DHDDS"/>
    <property type="match status" value="1"/>
</dbReference>
<dbReference type="PANTHER" id="PTHR10291">
    <property type="entry name" value="DEHYDRODOLICHYL DIPHOSPHATE SYNTHASE FAMILY MEMBER"/>
    <property type="match status" value="1"/>
</dbReference>
<dbReference type="Pfam" id="PF01255">
    <property type="entry name" value="Prenyltransf"/>
    <property type="match status" value="1"/>
</dbReference>
<dbReference type="SUPFAM" id="SSF64005">
    <property type="entry name" value="Undecaprenyl diphosphate synthase"/>
    <property type="match status" value="1"/>
</dbReference>
<dbReference type="PROSITE" id="PS01066">
    <property type="entry name" value="UPP_SYNTHASE"/>
    <property type="match status" value="1"/>
</dbReference>